<proteinExistence type="inferred from homology"/>
<sequence length="282" mass="31113">MGPKSRIIHEQPNIENTIPASLYQAVSPERFSLEDDDKFVIYGGGNSYAIQVLQNDPSQELVVCPELESVDYSNVSLFVLNTSLIVWFNSADLGLELPYQSIILHALHTLSDDTFLYLQILSNECITSIPSGTTEFVPSIEIRIVKNDKPGNPLNDNPLLVHNSNSSIETVYEAMSKCSAFHFDSDSEDESGTYAFDSAEQTPALEIPSHWLNNNVDDVDSDEALLRNTGIADDLEIDDVDETGNVNEVAAMHVDVGYASIAGSIRKRDEDDVSIAKARRVE</sequence>
<keyword id="KW-0963">Cytoplasm</keyword>
<keyword id="KW-0539">Nucleus</keyword>
<keyword id="KW-1185">Reference proteome</keyword>
<dbReference type="EMBL" id="CP000500">
    <property type="protein sequence ID" value="ABN67751.2"/>
    <property type="molecule type" value="Genomic_DNA"/>
</dbReference>
<dbReference type="RefSeq" id="XP_001385780.2">
    <property type="nucleotide sequence ID" value="XM_001385743.1"/>
</dbReference>
<dbReference type="FunCoup" id="A3LX72">
    <property type="interactions" value="48"/>
</dbReference>
<dbReference type="STRING" id="322104.A3LX72"/>
<dbReference type="GeneID" id="4839970"/>
<dbReference type="KEGG" id="pic:PICST_62387"/>
<dbReference type="eggNOG" id="ENOG502RY1I">
    <property type="taxonomic scope" value="Eukaryota"/>
</dbReference>
<dbReference type="HOGENOM" id="CLU_087379_0_0_1"/>
<dbReference type="InParanoid" id="A3LX72"/>
<dbReference type="OMA" id="HEQPNVE"/>
<dbReference type="OrthoDB" id="19714at2759"/>
<dbReference type="Proteomes" id="UP000002258">
    <property type="component" value="Chromosome 6"/>
</dbReference>
<dbReference type="GO" id="GO:0005829">
    <property type="term" value="C:cytosol"/>
    <property type="evidence" value="ECO:0007669"/>
    <property type="project" value="TreeGrafter"/>
</dbReference>
<dbReference type="GO" id="GO:0034715">
    <property type="term" value="C:pICln-Sm protein complex"/>
    <property type="evidence" value="ECO:0007669"/>
    <property type="project" value="TreeGrafter"/>
</dbReference>
<dbReference type="GO" id="GO:0005681">
    <property type="term" value="C:spliceosomal complex"/>
    <property type="evidence" value="ECO:0007669"/>
    <property type="project" value="TreeGrafter"/>
</dbReference>
<dbReference type="GO" id="GO:0045292">
    <property type="term" value="P:mRNA cis splicing, via spliceosome"/>
    <property type="evidence" value="ECO:0007669"/>
    <property type="project" value="TreeGrafter"/>
</dbReference>
<dbReference type="GO" id="GO:0000387">
    <property type="term" value="P:spliceosomal snRNP assembly"/>
    <property type="evidence" value="ECO:0007669"/>
    <property type="project" value="TreeGrafter"/>
</dbReference>
<dbReference type="Gene3D" id="2.30.29.30">
    <property type="entry name" value="Pleckstrin-homology domain (PH domain)/Phosphotyrosine-binding domain (PTB)"/>
    <property type="match status" value="1"/>
</dbReference>
<dbReference type="InterPro" id="IPR039924">
    <property type="entry name" value="ICln/Lot5/Saf5"/>
</dbReference>
<dbReference type="InterPro" id="IPR011993">
    <property type="entry name" value="PH-like_dom_sf"/>
</dbReference>
<dbReference type="PANTHER" id="PTHR21399">
    <property type="entry name" value="CHLORIDE CONDUCTANCE REGULATORY PROTEIN ICLN"/>
    <property type="match status" value="1"/>
</dbReference>
<dbReference type="PANTHER" id="PTHR21399:SF0">
    <property type="entry name" value="METHYLOSOME SUBUNIT PICLN"/>
    <property type="match status" value="1"/>
</dbReference>
<dbReference type="Pfam" id="PF03517">
    <property type="entry name" value="Voldacs"/>
    <property type="match status" value="1"/>
</dbReference>
<name>LOT5_PICST</name>
<protein>
    <recommendedName>
        <fullName>Protein LOT5</fullName>
    </recommendedName>
</protein>
<organism>
    <name type="scientific">Scheffersomyces stipitis (strain ATCC 58785 / CBS 6054 / NBRC 10063 / NRRL Y-11545)</name>
    <name type="common">Yeast</name>
    <name type="synonym">Pichia stipitis</name>
    <dbReference type="NCBI Taxonomy" id="322104"/>
    <lineage>
        <taxon>Eukaryota</taxon>
        <taxon>Fungi</taxon>
        <taxon>Dikarya</taxon>
        <taxon>Ascomycota</taxon>
        <taxon>Saccharomycotina</taxon>
        <taxon>Pichiomycetes</taxon>
        <taxon>Debaryomycetaceae</taxon>
        <taxon>Scheffersomyces</taxon>
    </lineage>
</organism>
<evidence type="ECO:0000250" key="1"/>
<evidence type="ECO:0000305" key="2"/>
<gene>
    <name type="primary">LOT5</name>
    <name type="ORF">PICST_62387</name>
</gene>
<comment type="subcellular location">
    <subcellularLocation>
        <location evidence="1">Cytoplasm</location>
    </subcellularLocation>
    <subcellularLocation>
        <location evidence="1">Nucleus</location>
    </subcellularLocation>
</comment>
<comment type="similarity">
    <text evidence="2">Belongs to the LOT5 family.</text>
</comment>
<feature type="chain" id="PRO_0000324401" description="Protein LOT5">
    <location>
        <begin position="1"/>
        <end position="282"/>
    </location>
</feature>
<accession>A3LX72</accession>
<reference key="1">
    <citation type="journal article" date="2007" name="Nat. Biotechnol.">
        <title>Genome sequence of the lignocellulose-bioconverting and xylose-fermenting yeast Pichia stipitis.</title>
        <authorList>
            <person name="Jeffries T.W."/>
            <person name="Grigoriev I.V."/>
            <person name="Grimwood J."/>
            <person name="Laplaza J.M."/>
            <person name="Aerts A."/>
            <person name="Salamov A."/>
            <person name="Schmutz J."/>
            <person name="Lindquist E."/>
            <person name="Dehal P."/>
            <person name="Shapiro H."/>
            <person name="Jin Y.-S."/>
            <person name="Passoth V."/>
            <person name="Richardson P.M."/>
        </authorList>
    </citation>
    <scope>NUCLEOTIDE SEQUENCE [LARGE SCALE GENOMIC DNA]</scope>
    <source>
        <strain>ATCC 58785 / CBS 6054 / NBRC 10063 / NRRL Y-11545</strain>
    </source>
</reference>